<proteinExistence type="inferred from homology"/>
<protein>
    <recommendedName>
        <fullName evidence="1">Ion-translocating oxidoreductase complex subunit A</fullName>
        <ecNumber evidence="1">7.-.-.-</ecNumber>
    </recommendedName>
    <alternativeName>
        <fullName evidence="1">Rnf electron transport complex subunit A</fullName>
    </alternativeName>
</protein>
<gene>
    <name evidence="1" type="primary">rnfA</name>
    <name type="ordered locus">VV1_3093</name>
</gene>
<accession>Q8D890</accession>
<keyword id="KW-0997">Cell inner membrane</keyword>
<keyword id="KW-1003">Cell membrane</keyword>
<keyword id="KW-0249">Electron transport</keyword>
<keyword id="KW-0472">Membrane</keyword>
<keyword id="KW-1278">Translocase</keyword>
<keyword id="KW-0812">Transmembrane</keyword>
<keyword id="KW-1133">Transmembrane helix</keyword>
<keyword id="KW-0813">Transport</keyword>
<sequence length="192" mass="20798">MTEYILLLIGTVLVNNFVLVKFLGLCPFMGVSKKLETAIGMGLATTFVLTMASVCAYLVESYILEPLHIEYLRTMSFILVIAVVVQFTEMVVHKTSPTLYRLLGIFLPLITTNCAVLGVALLNINENHSFVESIIYGFGAAVGFSLVLILFASMRERISAADVPAPFKGASIAMITAGLMSLAFMGFTGLVK</sequence>
<reference key="1">
    <citation type="submission" date="2002-12" db="EMBL/GenBank/DDBJ databases">
        <title>Complete genome sequence of Vibrio vulnificus CMCP6.</title>
        <authorList>
            <person name="Rhee J.H."/>
            <person name="Kim S.Y."/>
            <person name="Chung S.S."/>
            <person name="Kim J.J."/>
            <person name="Moon Y.H."/>
            <person name="Jeong H."/>
            <person name="Choy H.E."/>
        </authorList>
    </citation>
    <scope>NUCLEOTIDE SEQUENCE [LARGE SCALE GENOMIC DNA]</scope>
    <source>
        <strain>CMCP6</strain>
    </source>
</reference>
<dbReference type="EC" id="7.-.-.-" evidence="1"/>
<dbReference type="EMBL" id="AE016795">
    <property type="protein sequence ID" value="AAO11416.1"/>
    <property type="molecule type" value="Genomic_DNA"/>
</dbReference>
<dbReference type="SMR" id="Q8D890"/>
<dbReference type="KEGG" id="vvu:VV1_3093"/>
<dbReference type="HOGENOM" id="CLU_095255_1_0_6"/>
<dbReference type="Proteomes" id="UP000002275">
    <property type="component" value="Chromosome 1"/>
</dbReference>
<dbReference type="GO" id="GO:0005886">
    <property type="term" value="C:plasma membrane"/>
    <property type="evidence" value="ECO:0007669"/>
    <property type="project" value="UniProtKB-SubCell"/>
</dbReference>
<dbReference type="GO" id="GO:0022900">
    <property type="term" value="P:electron transport chain"/>
    <property type="evidence" value="ECO:0007669"/>
    <property type="project" value="UniProtKB-UniRule"/>
</dbReference>
<dbReference type="HAMAP" id="MF_00459">
    <property type="entry name" value="RsxA_RnfA"/>
    <property type="match status" value="1"/>
</dbReference>
<dbReference type="InterPro" id="IPR011293">
    <property type="entry name" value="Ion_transpt_RnfA/RsxA"/>
</dbReference>
<dbReference type="InterPro" id="IPR003667">
    <property type="entry name" value="NqrDE/RnfAE"/>
</dbReference>
<dbReference type="InterPro" id="IPR050133">
    <property type="entry name" value="NqrDE/RnfAE_oxidrdctase"/>
</dbReference>
<dbReference type="NCBIfam" id="NF003481">
    <property type="entry name" value="PRK05151.1"/>
    <property type="match status" value="1"/>
</dbReference>
<dbReference type="NCBIfam" id="TIGR01943">
    <property type="entry name" value="rnfA"/>
    <property type="match status" value="1"/>
</dbReference>
<dbReference type="PANTHER" id="PTHR30335">
    <property type="entry name" value="INTEGRAL MEMBRANE PROTEIN OF SOXR-REDUCING COMPLEX"/>
    <property type="match status" value="1"/>
</dbReference>
<dbReference type="PANTHER" id="PTHR30335:SF0">
    <property type="entry name" value="ION-TRANSLOCATING OXIDOREDUCTASE COMPLEX SUBUNIT A"/>
    <property type="match status" value="1"/>
</dbReference>
<dbReference type="Pfam" id="PF02508">
    <property type="entry name" value="Rnf-Nqr"/>
    <property type="match status" value="1"/>
</dbReference>
<dbReference type="PIRSF" id="PIRSF006102">
    <property type="entry name" value="NQR_DE"/>
    <property type="match status" value="1"/>
</dbReference>
<comment type="function">
    <text evidence="1">Part of a membrane-bound complex that couples electron transfer with translocation of ions across the membrane.</text>
</comment>
<comment type="subunit">
    <text evidence="1">The complex is composed of six subunits: RnfA, RnfB, RnfC, RnfD, RnfE and RnfG.</text>
</comment>
<comment type="subcellular location">
    <subcellularLocation>
        <location evidence="1">Cell inner membrane</location>
        <topology evidence="1">Multi-pass membrane protein</topology>
    </subcellularLocation>
</comment>
<comment type="similarity">
    <text evidence="1">Belongs to the NqrDE/RnfAE family.</text>
</comment>
<name>RNFA_VIBVU</name>
<organism>
    <name type="scientific">Vibrio vulnificus (strain CMCP6)</name>
    <dbReference type="NCBI Taxonomy" id="216895"/>
    <lineage>
        <taxon>Bacteria</taxon>
        <taxon>Pseudomonadati</taxon>
        <taxon>Pseudomonadota</taxon>
        <taxon>Gammaproteobacteria</taxon>
        <taxon>Vibrionales</taxon>
        <taxon>Vibrionaceae</taxon>
        <taxon>Vibrio</taxon>
    </lineage>
</organism>
<evidence type="ECO:0000255" key="1">
    <source>
        <dbReference type="HAMAP-Rule" id="MF_00459"/>
    </source>
</evidence>
<feature type="chain" id="PRO_0000214301" description="Ion-translocating oxidoreductase complex subunit A">
    <location>
        <begin position="1"/>
        <end position="192"/>
    </location>
</feature>
<feature type="transmembrane region" description="Helical" evidence="1">
    <location>
        <begin position="5"/>
        <end position="25"/>
    </location>
</feature>
<feature type="transmembrane region" description="Helical" evidence="1">
    <location>
        <begin position="39"/>
        <end position="59"/>
    </location>
</feature>
<feature type="transmembrane region" description="Helical" evidence="1">
    <location>
        <begin position="72"/>
        <end position="92"/>
    </location>
</feature>
<feature type="transmembrane region" description="Helical" evidence="1">
    <location>
        <begin position="102"/>
        <end position="122"/>
    </location>
</feature>
<feature type="transmembrane region" description="Helical" evidence="1">
    <location>
        <begin position="134"/>
        <end position="154"/>
    </location>
</feature>
<feature type="transmembrane region" description="Helical" evidence="1">
    <location>
        <begin position="171"/>
        <end position="191"/>
    </location>
</feature>